<sequence length="58" mass="6285">ISEVKMDAEFRHDSGYEVHHQKLVFFAEDVGSNKGAIIGLMVGGVVIATVIVITLVML</sequence>
<proteinExistence type="evidence at protein level"/>
<protein>
    <recommendedName>
        <fullName evidence="2">Amyloid-beta precursor protein</fullName>
    </recommendedName>
    <alternativeName>
        <fullName>ABPP</fullName>
        <shortName>APP</shortName>
    </alternativeName>
    <alternativeName>
        <fullName>Alzheimer disease amyloid A4 protein homolog</fullName>
    </alternativeName>
    <alternativeName>
        <fullName>Alzheimer disease amyloid protein</fullName>
    </alternativeName>
    <alternativeName>
        <fullName evidence="5">Amyloid precursor protein</fullName>
    </alternativeName>
    <alternativeName>
        <fullName evidence="3">Amyloid-beta (A4) precursor protein</fullName>
    </alternativeName>
    <alternativeName>
        <fullName>Amyloid-beta A4 protein</fullName>
    </alternativeName>
    <component>
        <recommendedName>
            <fullName>Soluble APP-beta</fullName>
            <shortName>S-APP-beta</shortName>
        </recommendedName>
    </component>
    <component>
        <recommendedName>
            <fullName>CTF-alpha</fullName>
        </recommendedName>
    </component>
    <component>
        <recommendedName>
            <fullName>Amyloid-beta protein 42</fullName>
            <shortName>Abeta42</shortName>
        </recommendedName>
        <alternativeName>
            <fullName>Beta-APP42</fullName>
        </alternativeName>
    </component>
    <component>
        <recommendedName>
            <fullName>Amyloid-beta protein 40</fullName>
            <shortName>Abeta40</shortName>
        </recommendedName>
        <alternativeName>
            <fullName>Beta-APP40</fullName>
        </alternativeName>
    </component>
    <component>
        <recommendedName>
            <fullName>Gamma-secretase C-terminal fragment 59</fullName>
        </recommendedName>
        <alternativeName>
            <fullName>Gamma-CTF(59)</fullName>
        </alternativeName>
    </component>
    <component>
        <recommendedName>
            <fullName>Gamma-secretase C-terminal fragment 57</fullName>
        </recommendedName>
        <alternativeName>
            <fullName>Gamma-CTF(57)</fullName>
        </alternativeName>
    </component>
</protein>
<reference key="1">
    <citation type="journal article" date="1991" name="Brain Res. Mol. Brain Res.">
        <title>Conservation of the sequence of the Alzheimer's disease amyloid peptide in dog, polar bear and five other mammals by cross-species polymerase chain reaction analysis.</title>
        <authorList>
            <person name="Johnstone E.M."/>
            <person name="Chaney M.O."/>
            <person name="Norris F.H."/>
            <person name="Pascual R."/>
            <person name="Little S.P."/>
        </authorList>
    </citation>
    <scope>NUCLEOTIDE SEQUENCE [MRNA]</scope>
    <source>
        <tissue>Kidney</tissue>
    </source>
</reference>
<organism>
    <name type="scientific">Canis lupus familiaris</name>
    <name type="common">Dog</name>
    <name type="synonym">Canis familiaris</name>
    <dbReference type="NCBI Taxonomy" id="9615"/>
    <lineage>
        <taxon>Eukaryota</taxon>
        <taxon>Metazoa</taxon>
        <taxon>Chordata</taxon>
        <taxon>Craniata</taxon>
        <taxon>Vertebrata</taxon>
        <taxon>Euteleostomi</taxon>
        <taxon>Mammalia</taxon>
        <taxon>Eutheria</taxon>
        <taxon>Laurasiatheria</taxon>
        <taxon>Carnivora</taxon>
        <taxon>Caniformia</taxon>
        <taxon>Canidae</taxon>
        <taxon>Canis</taxon>
    </lineage>
</organism>
<evidence type="ECO:0000250" key="1"/>
<evidence type="ECO:0000250" key="2">
    <source>
        <dbReference type="UniProtKB" id="P05067"/>
    </source>
</evidence>
<evidence type="ECO:0000250" key="3">
    <source>
        <dbReference type="UniProtKB" id="P12023"/>
    </source>
</evidence>
<evidence type="ECO:0000255" key="4"/>
<evidence type="ECO:0000305" key="5"/>
<accession>Q28280</accession>
<dbReference type="EMBL" id="X56125">
    <property type="protein sequence ID" value="CAA39590.1"/>
    <property type="molecule type" value="mRNA"/>
</dbReference>
<dbReference type="PDB" id="8KH2">
    <property type="method" value="X-ray"/>
    <property type="resolution" value="2.00 A"/>
    <property type="chains" value="A=7-48"/>
</dbReference>
<dbReference type="PDBsum" id="8KH2"/>
<dbReference type="BMRB" id="Q28280"/>
<dbReference type="FunCoup" id="Q28280">
    <property type="interactions" value="1209"/>
</dbReference>
<dbReference type="STRING" id="9615.ENSCAFP00000012583"/>
<dbReference type="PaxDb" id="9612-ENSCAFP00000012583"/>
<dbReference type="eggNOG" id="KOG3540">
    <property type="taxonomic scope" value="Eukaryota"/>
</dbReference>
<dbReference type="InParanoid" id="Q28280"/>
<dbReference type="OrthoDB" id="6147836at2759"/>
<dbReference type="Proteomes" id="UP000002254">
    <property type="component" value="Unplaced"/>
</dbReference>
<dbReference type="Proteomes" id="UP000694429">
    <property type="component" value="Unplaced"/>
</dbReference>
<dbReference type="Proteomes" id="UP000694542">
    <property type="component" value="Unplaced"/>
</dbReference>
<dbReference type="Proteomes" id="UP000805418">
    <property type="component" value="Unplaced"/>
</dbReference>
<dbReference type="GO" id="GO:0009986">
    <property type="term" value="C:cell surface"/>
    <property type="evidence" value="ECO:0007669"/>
    <property type="project" value="UniProtKB-SubCell"/>
</dbReference>
<dbReference type="GO" id="GO:0005905">
    <property type="term" value="C:clathrin-coated pit"/>
    <property type="evidence" value="ECO:0007669"/>
    <property type="project" value="UniProtKB-SubCell"/>
</dbReference>
<dbReference type="GO" id="GO:0005769">
    <property type="term" value="C:early endosome"/>
    <property type="evidence" value="ECO:0000250"/>
    <property type="project" value="UniProtKB"/>
</dbReference>
<dbReference type="GO" id="GO:0005576">
    <property type="term" value="C:extracellular region"/>
    <property type="evidence" value="ECO:0007669"/>
    <property type="project" value="UniProtKB-SubCell"/>
</dbReference>
<dbReference type="GO" id="GO:0005798">
    <property type="term" value="C:Golgi-associated vesicle"/>
    <property type="evidence" value="ECO:0000250"/>
    <property type="project" value="UniProtKB"/>
</dbReference>
<dbReference type="GO" id="GO:0030426">
    <property type="term" value="C:growth cone"/>
    <property type="evidence" value="ECO:0007669"/>
    <property type="project" value="UniProtKB-SubCell"/>
</dbReference>
<dbReference type="GO" id="GO:0005634">
    <property type="term" value="C:nucleus"/>
    <property type="evidence" value="ECO:0007669"/>
    <property type="project" value="UniProtKB-SubCell"/>
</dbReference>
<dbReference type="GO" id="GO:0043204">
    <property type="term" value="C:perikaryon"/>
    <property type="evidence" value="ECO:0007669"/>
    <property type="project" value="UniProtKB-SubCell"/>
</dbReference>
<dbReference type="GO" id="GO:0005886">
    <property type="term" value="C:plasma membrane"/>
    <property type="evidence" value="ECO:0007669"/>
    <property type="project" value="UniProtKB-SubCell"/>
</dbReference>
<dbReference type="GO" id="GO:0055037">
    <property type="term" value="C:recycling endosome"/>
    <property type="evidence" value="ECO:0000250"/>
    <property type="project" value="UniProtKB"/>
</dbReference>
<dbReference type="GO" id="GO:0046872">
    <property type="term" value="F:metal ion binding"/>
    <property type="evidence" value="ECO:0007669"/>
    <property type="project" value="UniProtKB-KW"/>
</dbReference>
<dbReference type="GO" id="GO:0050890">
    <property type="term" value="P:cognition"/>
    <property type="evidence" value="ECO:0000250"/>
    <property type="project" value="UniProtKB"/>
</dbReference>
<dbReference type="CDD" id="cd21707">
    <property type="entry name" value="JMTM_APP"/>
    <property type="match status" value="1"/>
</dbReference>
<dbReference type="FunFam" id="4.10.230.10:FF:000001">
    <property type="entry name" value="Amyloid beta A4 protein"/>
    <property type="match status" value="1"/>
</dbReference>
<dbReference type="Gene3D" id="4.10.230.10">
    <property type="entry name" value="Amyloidogenic glycoprotein, amyloid-beta peptide"/>
    <property type="match status" value="1"/>
</dbReference>
<dbReference type="InterPro" id="IPR008155">
    <property type="entry name" value="Amyloid_glyco"/>
</dbReference>
<dbReference type="InterPro" id="IPR013803">
    <property type="entry name" value="Amyloid_glyco_Abeta"/>
</dbReference>
<dbReference type="InterPro" id="IPR037071">
    <property type="entry name" value="Amyloid_glyco_Abeta_sf"/>
</dbReference>
<dbReference type="PANTHER" id="PTHR23103">
    <property type="entry name" value="ALZHEIMER'S DISEASE BETA-AMYLOID RELATED"/>
    <property type="match status" value="1"/>
</dbReference>
<dbReference type="PANTHER" id="PTHR23103:SF7">
    <property type="entry name" value="AMYLOID-BETA PRECURSOR PROTEIN"/>
    <property type="match status" value="1"/>
</dbReference>
<dbReference type="Pfam" id="PF03494">
    <property type="entry name" value="Beta-APP"/>
    <property type="match status" value="1"/>
</dbReference>
<dbReference type="PRINTS" id="PR00204">
    <property type="entry name" value="BETAAMYLOID"/>
</dbReference>
<feature type="chain" id="PRO_0000226241" description="Amyloid-beta precursor protein">
    <location>
        <begin position="1" status="less than"/>
        <end position="58" status="greater than"/>
    </location>
</feature>
<feature type="chain" id="PRO_0000000070" description="Soluble APP-beta" evidence="1">
    <location>
        <begin position="1" status="less than"/>
        <end position="6"/>
    </location>
</feature>
<feature type="chain" id="PRO_0000000071" description="CTF-alpha" evidence="1">
    <location>
        <begin position="7"/>
        <end position="58" status="greater than"/>
    </location>
</feature>
<feature type="chain" id="PRO_0000000072" description="Amyloid-beta protein 42" evidence="2">
    <location>
        <begin position="7"/>
        <end position="48"/>
    </location>
</feature>
<feature type="chain" id="PRO_0000000073" description="Amyloid-beta protein 40" evidence="2">
    <location>
        <begin position="7"/>
        <end position="46"/>
    </location>
</feature>
<feature type="chain" id="PRO_0000000074" description="Gamma-secretase C-terminal fragment 59" evidence="1">
    <location>
        <begin position="47"/>
        <end position="58" status="greater than"/>
    </location>
</feature>
<feature type="chain" id="PRO_0000000075" description="Gamma-secretase C-terminal fragment 57" evidence="1">
    <location>
        <begin position="49"/>
        <end position="58" status="greater than"/>
    </location>
</feature>
<feature type="topological domain" description="Extracellular" evidence="4">
    <location>
        <begin position="1" status="less than"/>
        <end position="34"/>
    </location>
</feature>
<feature type="transmembrane region" description="Helical" evidence="4">
    <location>
        <begin position="35"/>
        <end position="58"/>
    </location>
</feature>
<feature type="binding site" evidence="2">
    <location>
        <position position="12"/>
    </location>
    <ligand>
        <name>Cu(2+)</name>
        <dbReference type="ChEBI" id="CHEBI:29036"/>
    </ligand>
</feature>
<feature type="binding site" evidence="2">
    <location>
        <position position="12"/>
    </location>
    <ligand>
        <name>Zn(2+)</name>
        <dbReference type="ChEBI" id="CHEBI:29105"/>
    </ligand>
</feature>
<feature type="binding site" evidence="2">
    <location>
        <position position="16"/>
    </location>
    <ligand>
        <name>Cu(2+)</name>
        <dbReference type="ChEBI" id="CHEBI:29036"/>
    </ligand>
</feature>
<feature type="binding site" evidence="2">
    <location>
        <position position="16"/>
    </location>
    <ligand>
        <name>Zn(2+)</name>
        <dbReference type="ChEBI" id="CHEBI:29105"/>
    </ligand>
</feature>
<feature type="binding site" evidence="2">
    <location>
        <position position="19"/>
    </location>
    <ligand>
        <name>Cu(2+)</name>
        <dbReference type="ChEBI" id="CHEBI:29036"/>
    </ligand>
</feature>
<feature type="binding site" evidence="2">
    <location>
        <position position="19"/>
    </location>
    <ligand>
        <name>Zn(2+)</name>
        <dbReference type="ChEBI" id="CHEBI:29105"/>
    </ligand>
</feature>
<feature type="binding site" evidence="2">
    <location>
        <position position="20"/>
    </location>
    <ligand>
        <name>Cu(2+)</name>
        <dbReference type="ChEBI" id="CHEBI:29036"/>
    </ligand>
</feature>
<feature type="binding site" evidence="2">
    <location>
        <position position="20"/>
    </location>
    <ligand>
        <name>Zn(2+)</name>
        <dbReference type="ChEBI" id="CHEBI:29105"/>
    </ligand>
</feature>
<feature type="site" description="Cleavage; by ACE" evidence="2">
    <location>
        <begin position="13"/>
        <end position="14"/>
    </location>
</feature>
<feature type="non-terminal residue">
    <location>
        <position position="1"/>
    </location>
</feature>
<feature type="non-terminal residue">
    <location>
        <position position="58"/>
    </location>
</feature>
<keyword id="KW-0002">3D-structure</keyword>
<keyword id="KW-0034">Amyloid</keyword>
<keyword id="KW-1003">Cell membrane</keyword>
<keyword id="KW-0966">Cell projection</keyword>
<keyword id="KW-0168">Coated pit</keyword>
<keyword id="KW-0186">Copper</keyword>
<keyword id="KW-0963">Cytoplasm</keyword>
<keyword id="KW-0968">Cytoplasmic vesicle</keyword>
<keyword id="KW-0967">Endosome</keyword>
<keyword id="KW-0472">Membrane</keyword>
<keyword id="KW-0479">Metal-binding</keyword>
<keyword id="KW-0539">Nucleus</keyword>
<keyword id="KW-1185">Reference proteome</keyword>
<keyword id="KW-0964">Secreted</keyword>
<keyword id="KW-0812">Transmembrane</keyword>
<keyword id="KW-1133">Transmembrane helix</keyword>
<keyword id="KW-0862">Zinc</keyword>
<comment type="function">
    <text evidence="1 2">Functions as a cell surface receptor and performs physiological functions on the surface of neurons relevant to neurite growth, neuronal adhesion and axonogenesis. Interaction between APP molecules on neighboring cells promotes synaptogenesis. Involved in cell mobility and transcription regulation through protein-protein interactions (By similarity). Can promote transcription activation through binding to APBB1-KAT5 and inhibit Notch signaling through interaction with Numb (By similarity). Couples to apoptosis-inducing pathways such as those mediated by G(o) and JIP (By similarity). Inhibits G(o)-alpha ATPase activity (By similarity). Acts as a kinesin I membrane receptor, mediating the axonal transport of beta-secretase and presenilin 1 (By similarity). By acting as a kinesin I membrane receptor, plays a role in axonal anterograde transport of cargo towards synapses in axons (By similarity). May be involved in copper homeostasis/oxidative stress through copper ion reduction (By similarity). In vitro, copper-metallated APP induces neuronal death directly or is potentiated through Cu(2+)-mediated low-density lipoprotein oxidation (By similarity). Can regulate neurite outgrowth through binding to components of the extracellular matrix such as heparin and collagen I and IV. Induces a AGER-dependent pathway that involves activation of p38 MAPK, resulting in internalization of amyloid-beta peptide and mitochondrial dysfunction in cultured cortical neurons. Provides Cu(2+) ions for GPC1 which are required for release of nitric oxide (NO) and subsequent degradation of the heparan sulfate chains on GPC1 (By similarity).</text>
</comment>
<comment type="subunit">
    <text evidence="1 2 3">Binds, via its C-terminus, to the PID domain of several cytoplasmic proteins, including APBB family members, the APBA family, MAPK8IP1, SHC1 and NUMB and DAB1 (By similarity). Binding to DAB1 inhibits its serine phosphorylation (By similarity). Interacts (via NPXY motif) with DAB2 (via PID domain); the interaction is impaired by tyrosine phosphorylation of the NPXY motif. Also interacts with GPCR-like protein BPP, APPBP1, IB1, KNS2 (via its TPR domains), APPBP2 (via BaSS) and DDB1. In vitro, it binds MAPT via the MT-binding domains (By similarity). Associates with microtubules in the presence of ATP and in a kinesin-dependent manner (By similarity). Interacts, through a C-terminal domain, with GNAO1. Interacts with CPEB1, ANKS1B and AGER (By similarity). Interacts with ITM2B. Interacts with ITM2C. Interacts with IDE. Can form homodimers; dimerization is enhanced in the presence of Cu(2+) ions. Can form homodimers; this is promoted by heparin binding (By similarity). Interacts with SORL1 (via N-terminal ectodomain); this interaction retains APP in the trans-Golgi network and reduces processing into soluble APP-alpha and amyloid-beta peptides (By similarity). Interacts with PLD3 (By similarity). Interacts with VDAC1 (By similarity). Interacts with NSG1; could regulate APP processing (By similarity). Amyloid-beta protein 42 interacts with FPR2 (By similarity). Interacts with LRRK2 (By similarity). Interacts (via cytoplasmic domain) with KIF5B (By similarity). Interacts (via C-terminus) with APBB2/FE65L1 (via C-terminus) (By similarity). Interacts (via intracellular domain) with APBB3 (By similarity).</text>
</comment>
<comment type="subcellular location">
    <subcellularLocation>
        <location evidence="2">Cell membrane</location>
        <topology evidence="2">Single-pass type I membrane protein</topology>
    </subcellularLocation>
    <subcellularLocation>
        <location evidence="2">Membrane</location>
        <topology evidence="2">Single-pass type I membrane protein</topology>
    </subcellularLocation>
    <subcellularLocation>
        <location evidence="2">Perikaryon</location>
    </subcellularLocation>
    <subcellularLocation>
        <location evidence="2">Cell projection</location>
        <location evidence="2">Growth cone</location>
    </subcellularLocation>
    <subcellularLocation>
        <location evidence="2">Membrane</location>
        <location evidence="2">Clathrin-coated pit</location>
    </subcellularLocation>
    <subcellularLocation>
        <location evidence="2">Early endosome</location>
    </subcellularLocation>
    <subcellularLocation>
        <location evidence="2">Cytoplasmic vesicle</location>
    </subcellularLocation>
    <text evidence="2">Cell surface protein that rapidly becomes internalized via clathrin-coated pits. Only a minor proportion is present at the cell membrane; most of the protein is present in intracellular vesicles. During maturation, the immature APP (N-glycosylated in the endoplasmic reticulum) moves to the Golgi complex where complete maturation occurs (O-glycosylated and sulfated). After alpha-secretase cleavage, soluble APP is released into the extracellular space and the C-terminal is internalized to endosomes and lysosomes. Some APP accumulates in secretory transport vesicles leaving the late Golgi compartment and returns to the cell surface.</text>
</comment>
<comment type="subcellular location">
    <molecule>Soluble APP-beta</molecule>
    <subcellularLocation>
        <location evidence="2">Secreted</location>
    </subcellularLocation>
</comment>
<comment type="subcellular location">
    <molecule>Amyloid-beta protein 42</molecule>
    <subcellularLocation>
        <location evidence="2">Cell surface</location>
    </subcellularLocation>
    <text evidence="2">Associates with FPR2 at the cell surface and the complex is then rapidly internalized.</text>
</comment>
<comment type="subcellular location">
    <molecule>Gamma-secretase C-terminal fragment 59</molecule>
    <subcellularLocation>
        <location evidence="2">Nucleus</location>
    </subcellularLocation>
    <subcellularLocation>
        <location evidence="2">Cytoplasm</location>
    </subcellularLocation>
    <text evidence="2 3">Located to both the cytoplasm and nuclei of neurons. It can be translocated to the nucleus through association with APBB1 (Fe65). In dopaminergic neurons, the phosphorylated form is localized to the nucleus (By similarity).</text>
</comment>
<comment type="PTM">
    <text evidence="2">Proteolytically processed under normal cellular conditions. Cleavage either by alpha-secretase, beta-secretase or theta-secretase leads to generation and extracellular release of soluble APP peptides, S-APP-alpha and S-APP-beta, and the retention of corresponding membrane-anchored C-terminal fragments, C80, C83 and C99. Subsequent processing of C80 and C83 by gamma-secretase yields P3 peptides. This is the major secretory pathway and is non-amyloidogenic. Alternatively, presenilin/nicastrin-mediated gamma-secretase processing of C99 releases the amyloid-beta proteins, amyloid-beta protein 40 and amyloid-beta protein 42, major components of amyloid plaques, and the cytotoxic C-terminal fragments, gamma-CTF(50), gamma-CTF(57) and gamma-CTF(59). PSEN1 cleavage is more efficient with C83 than with C99 as substrate (in vitro). Amyloid-beta protein 40 and Amyloid-beta protein 42 are cleaved by ACE. Many other minor amyloid-beta peptides, amyloid-beta 1-X peptides, are found in cerebral spinal fluid (CSF) including the amyloid-beta X-15 peptides, produced from the cleavage by alpha-secretase.</text>
</comment>
<comment type="similarity">
    <text evidence="5">Belongs to the APP family.</text>
</comment>
<name>A4_CANLF</name>
<gene>
    <name type="primary">APP</name>
</gene>